<comment type="catalytic activity">
    <reaction>
        <text>L-asparagine + H2O = L-aspartate + NH4(+)</text>
        <dbReference type="Rhea" id="RHEA:21016"/>
        <dbReference type="ChEBI" id="CHEBI:15377"/>
        <dbReference type="ChEBI" id="CHEBI:28938"/>
        <dbReference type="ChEBI" id="CHEBI:29991"/>
        <dbReference type="ChEBI" id="CHEBI:58048"/>
        <dbReference type="EC" id="3.5.1.1"/>
    </reaction>
</comment>
<comment type="subcellular location">
    <subcellularLocation>
        <location evidence="1">Secreted</location>
        <location evidence="1">Cell wall</location>
    </subcellularLocation>
</comment>
<comment type="similarity">
    <text evidence="4">Belongs to the asparaginase 1 family.</text>
</comment>
<gene>
    <name type="ORF">SPAC186.03</name>
</gene>
<sequence length="360" mass="38748">MWRSIISFLFFSVALCQPFLFQKRSSNISDFISFNASLPNVTIFAMGGTIAGYASSSTETVDYAAGSVGIATLVDAVPAIKNFSNIRGVQVTNVGSEELTPANVLNLTQLILAEVAKPDVHGIVVTHGTDSLEETAMFLDMTVNTTKPIVVVGAMRPSTAISADGPMNLLNAVVVAASNRSIGRGTMILLNDRIGSAFYTTKTNGNMLDTFKSYEAGFLGMILDQRPHFFYSPATPTGKVHFDVSNTTELPAVEILYGYQGLNPNLAKAAVDLGAKGLVLAGMGAASWTDPGNEVIDGLISNQSIPVVYSHRTMDGFSDYYYNGIPSYFQNPQKARYMLMLSINAGYSIQNITDIFSLEY</sequence>
<accession>P87015</accession>
<proteinExistence type="inferred from homology"/>
<organism>
    <name type="scientific">Schizosaccharomyces pombe (strain 972 / ATCC 24843)</name>
    <name type="common">Fission yeast</name>
    <dbReference type="NCBI Taxonomy" id="284812"/>
    <lineage>
        <taxon>Eukaryota</taxon>
        <taxon>Fungi</taxon>
        <taxon>Dikarya</taxon>
        <taxon>Ascomycota</taxon>
        <taxon>Taphrinomycotina</taxon>
        <taxon>Schizosaccharomycetes</taxon>
        <taxon>Schizosaccharomycetales</taxon>
        <taxon>Schizosaccharomycetaceae</taxon>
        <taxon>Schizosaccharomyces</taxon>
    </lineage>
</organism>
<dbReference type="EC" id="3.5.1.1"/>
<dbReference type="EMBL" id="Y11944">
    <property type="protein sequence ID" value="CAA72692.1"/>
    <property type="molecule type" value="Genomic_DNA"/>
</dbReference>
<dbReference type="EMBL" id="CU329670">
    <property type="protein sequence ID" value="CAB75867.1"/>
    <property type="molecule type" value="Genomic_DNA"/>
</dbReference>
<dbReference type="PIR" id="T43404">
    <property type="entry name" value="T43404"/>
</dbReference>
<dbReference type="RefSeq" id="NP_595021.1">
    <property type="nucleotide sequence ID" value="NM_001020452.2"/>
</dbReference>
<dbReference type="SMR" id="P87015"/>
<dbReference type="BioGRID" id="278950">
    <property type="interactions" value="1"/>
</dbReference>
<dbReference type="FunCoup" id="P87015">
    <property type="interactions" value="34"/>
</dbReference>
<dbReference type="STRING" id="284812.P87015"/>
<dbReference type="PaxDb" id="4896-SPAC186.03.1"/>
<dbReference type="EnsemblFungi" id="SPAC186.03.1">
    <property type="protein sequence ID" value="SPAC186.03.1:pep"/>
    <property type="gene ID" value="SPAC186.03"/>
</dbReference>
<dbReference type="KEGG" id="spo:2542491"/>
<dbReference type="PomBase" id="SPAC186.03"/>
<dbReference type="VEuPathDB" id="FungiDB:SPAC186.03"/>
<dbReference type="eggNOG" id="KOG0503">
    <property type="taxonomic scope" value="Eukaryota"/>
</dbReference>
<dbReference type="HOGENOM" id="CLU_019134_1_2_1"/>
<dbReference type="InParanoid" id="P87015"/>
<dbReference type="OMA" id="TKTYGFH"/>
<dbReference type="PhylomeDB" id="P87015"/>
<dbReference type="PRO" id="PR:P87015"/>
<dbReference type="Proteomes" id="UP000002485">
    <property type="component" value="Chromosome I"/>
</dbReference>
<dbReference type="GO" id="GO:0009986">
    <property type="term" value="C:cell surface"/>
    <property type="evidence" value="ECO:0000303"/>
    <property type="project" value="PomBase"/>
</dbReference>
<dbReference type="GO" id="GO:0005576">
    <property type="term" value="C:extracellular region"/>
    <property type="evidence" value="ECO:0007669"/>
    <property type="project" value="UniProtKB-KW"/>
</dbReference>
<dbReference type="GO" id="GO:0042597">
    <property type="term" value="C:periplasmic space"/>
    <property type="evidence" value="ECO:0000318"/>
    <property type="project" value="GO_Central"/>
</dbReference>
<dbReference type="GO" id="GO:0004067">
    <property type="term" value="F:asparaginase activity"/>
    <property type="evidence" value="ECO:0000318"/>
    <property type="project" value="GO_Central"/>
</dbReference>
<dbReference type="GO" id="GO:0006530">
    <property type="term" value="P:asparagine catabolic process"/>
    <property type="evidence" value="ECO:0000318"/>
    <property type="project" value="GO_Central"/>
</dbReference>
<dbReference type="CDD" id="cd08964">
    <property type="entry name" value="L-asparaginase_II"/>
    <property type="match status" value="1"/>
</dbReference>
<dbReference type="FunFam" id="3.40.50.1170:FF:000001">
    <property type="entry name" value="L-asparaginase 2"/>
    <property type="match status" value="1"/>
</dbReference>
<dbReference type="FunFam" id="3.40.50.40:FF:000006">
    <property type="entry name" value="L-asparaginase I"/>
    <property type="match status" value="1"/>
</dbReference>
<dbReference type="Gene3D" id="3.40.50.40">
    <property type="match status" value="1"/>
</dbReference>
<dbReference type="Gene3D" id="3.40.50.1170">
    <property type="entry name" value="L-asparaginase, N-terminal domain"/>
    <property type="match status" value="1"/>
</dbReference>
<dbReference type="InterPro" id="IPR004550">
    <property type="entry name" value="AsnASE_II"/>
</dbReference>
<dbReference type="InterPro" id="IPR036152">
    <property type="entry name" value="Asp/glu_Ase-like_sf"/>
</dbReference>
<dbReference type="InterPro" id="IPR006034">
    <property type="entry name" value="Asparaginase/glutaminase-like"/>
</dbReference>
<dbReference type="InterPro" id="IPR040919">
    <property type="entry name" value="Asparaginase_C"/>
</dbReference>
<dbReference type="InterPro" id="IPR027473">
    <property type="entry name" value="L-asparaginase_C"/>
</dbReference>
<dbReference type="InterPro" id="IPR027474">
    <property type="entry name" value="L-asparaginase_N"/>
</dbReference>
<dbReference type="InterPro" id="IPR037152">
    <property type="entry name" value="L-asparaginase_N_sf"/>
</dbReference>
<dbReference type="NCBIfam" id="TIGR00520">
    <property type="entry name" value="asnASE_II"/>
    <property type="match status" value="1"/>
</dbReference>
<dbReference type="PANTHER" id="PTHR11707:SF28">
    <property type="entry name" value="60 KDA LYSOPHOSPHOLIPASE"/>
    <property type="match status" value="1"/>
</dbReference>
<dbReference type="PANTHER" id="PTHR11707">
    <property type="entry name" value="L-ASPARAGINASE"/>
    <property type="match status" value="1"/>
</dbReference>
<dbReference type="Pfam" id="PF00710">
    <property type="entry name" value="Asparaginase"/>
    <property type="match status" value="1"/>
</dbReference>
<dbReference type="Pfam" id="PF17763">
    <property type="entry name" value="Asparaginase_C"/>
    <property type="match status" value="1"/>
</dbReference>
<dbReference type="PIRSF" id="PIRSF001220">
    <property type="entry name" value="L-ASNase_gatD"/>
    <property type="match status" value="1"/>
</dbReference>
<dbReference type="PIRSF" id="PIRSF500176">
    <property type="entry name" value="L_ASNase"/>
    <property type="match status" value="1"/>
</dbReference>
<dbReference type="PRINTS" id="PR00139">
    <property type="entry name" value="ASNGLNASE"/>
</dbReference>
<dbReference type="SMART" id="SM00870">
    <property type="entry name" value="Asparaginase"/>
    <property type="match status" value="1"/>
</dbReference>
<dbReference type="SUPFAM" id="SSF53774">
    <property type="entry name" value="Glutaminase/Asparaginase"/>
    <property type="match status" value="1"/>
</dbReference>
<dbReference type="PROSITE" id="PS51732">
    <property type="entry name" value="ASN_GLN_ASE_3"/>
    <property type="match status" value="1"/>
</dbReference>
<reference key="1">
    <citation type="submission" date="1997-03" db="EMBL/GenBank/DDBJ databases">
        <authorList>
            <person name="Bonthron D.T."/>
        </authorList>
    </citation>
    <scope>NUCLEOTIDE SEQUENCE [GENOMIC DNA]</scope>
    <source>
        <strain>972 / ATCC 24843</strain>
    </source>
</reference>
<reference key="2">
    <citation type="journal article" date="2002" name="Nature">
        <title>The genome sequence of Schizosaccharomyces pombe.</title>
        <authorList>
            <person name="Wood V."/>
            <person name="Gwilliam R."/>
            <person name="Rajandream M.A."/>
            <person name="Lyne M.H."/>
            <person name="Lyne R."/>
            <person name="Stewart A."/>
            <person name="Sgouros J.G."/>
            <person name="Peat N."/>
            <person name="Hayles J."/>
            <person name="Baker S.G."/>
            <person name="Basham D."/>
            <person name="Bowman S."/>
            <person name="Brooks K."/>
            <person name="Brown D."/>
            <person name="Brown S."/>
            <person name="Chillingworth T."/>
            <person name="Churcher C.M."/>
            <person name="Collins M."/>
            <person name="Connor R."/>
            <person name="Cronin A."/>
            <person name="Davis P."/>
            <person name="Feltwell T."/>
            <person name="Fraser A."/>
            <person name="Gentles S."/>
            <person name="Goble A."/>
            <person name="Hamlin N."/>
            <person name="Harris D.E."/>
            <person name="Hidalgo J."/>
            <person name="Hodgson G."/>
            <person name="Holroyd S."/>
            <person name="Hornsby T."/>
            <person name="Howarth S."/>
            <person name="Huckle E.J."/>
            <person name="Hunt S."/>
            <person name="Jagels K."/>
            <person name="James K.D."/>
            <person name="Jones L."/>
            <person name="Jones M."/>
            <person name="Leather S."/>
            <person name="McDonald S."/>
            <person name="McLean J."/>
            <person name="Mooney P."/>
            <person name="Moule S."/>
            <person name="Mungall K.L."/>
            <person name="Murphy L.D."/>
            <person name="Niblett D."/>
            <person name="Odell C."/>
            <person name="Oliver K."/>
            <person name="O'Neil S."/>
            <person name="Pearson D."/>
            <person name="Quail M.A."/>
            <person name="Rabbinowitsch E."/>
            <person name="Rutherford K.M."/>
            <person name="Rutter S."/>
            <person name="Saunders D."/>
            <person name="Seeger K."/>
            <person name="Sharp S."/>
            <person name="Skelton J."/>
            <person name="Simmonds M.N."/>
            <person name="Squares R."/>
            <person name="Squares S."/>
            <person name="Stevens K."/>
            <person name="Taylor K."/>
            <person name="Taylor R.G."/>
            <person name="Tivey A."/>
            <person name="Walsh S.V."/>
            <person name="Warren T."/>
            <person name="Whitehead S."/>
            <person name="Woodward J.R."/>
            <person name="Volckaert G."/>
            <person name="Aert R."/>
            <person name="Robben J."/>
            <person name="Grymonprez B."/>
            <person name="Weltjens I."/>
            <person name="Vanstreels E."/>
            <person name="Rieger M."/>
            <person name="Schaefer M."/>
            <person name="Mueller-Auer S."/>
            <person name="Gabel C."/>
            <person name="Fuchs M."/>
            <person name="Duesterhoeft A."/>
            <person name="Fritzc C."/>
            <person name="Holzer E."/>
            <person name="Moestl D."/>
            <person name="Hilbert H."/>
            <person name="Borzym K."/>
            <person name="Langer I."/>
            <person name="Beck A."/>
            <person name="Lehrach H."/>
            <person name="Reinhardt R."/>
            <person name="Pohl T.M."/>
            <person name="Eger P."/>
            <person name="Zimmermann W."/>
            <person name="Wedler H."/>
            <person name="Wambutt R."/>
            <person name="Purnelle B."/>
            <person name="Goffeau A."/>
            <person name="Cadieu E."/>
            <person name="Dreano S."/>
            <person name="Gloux S."/>
            <person name="Lelaure V."/>
            <person name="Mottier S."/>
            <person name="Galibert F."/>
            <person name="Aves S.J."/>
            <person name="Xiang Z."/>
            <person name="Hunt C."/>
            <person name="Moore K."/>
            <person name="Hurst S.M."/>
            <person name="Lucas M."/>
            <person name="Rochet M."/>
            <person name="Gaillardin C."/>
            <person name="Tallada V.A."/>
            <person name="Garzon A."/>
            <person name="Thode G."/>
            <person name="Daga R.R."/>
            <person name="Cruzado L."/>
            <person name="Jimenez J."/>
            <person name="Sanchez M."/>
            <person name="del Rey F."/>
            <person name="Benito J."/>
            <person name="Dominguez A."/>
            <person name="Revuelta J.L."/>
            <person name="Moreno S."/>
            <person name="Armstrong J."/>
            <person name="Forsburg S.L."/>
            <person name="Cerutti L."/>
            <person name="Lowe T."/>
            <person name="McCombie W.R."/>
            <person name="Paulsen I."/>
            <person name="Potashkin J."/>
            <person name="Shpakovski G.V."/>
            <person name="Ussery D."/>
            <person name="Barrell B.G."/>
            <person name="Nurse P."/>
        </authorList>
    </citation>
    <scope>NUCLEOTIDE SEQUENCE [LARGE SCALE GENOMIC DNA]</scope>
    <source>
        <strain>972 / ATCC 24843</strain>
    </source>
</reference>
<feature type="signal peptide" evidence="2">
    <location>
        <begin position="1"/>
        <end position="16"/>
    </location>
</feature>
<feature type="chain" id="PRO_0000002363" description="Probable L-asparaginase 1">
    <location>
        <begin position="17"/>
        <end position="360"/>
    </location>
</feature>
<feature type="domain" description="Asparaginase/glutaminase" evidence="3">
    <location>
        <begin position="39"/>
        <end position="359"/>
    </location>
</feature>
<feature type="active site" description="O-isoaspartyl threonine intermediate" evidence="1">
    <location>
        <position position="49"/>
    </location>
</feature>
<feature type="binding site" evidence="1">
    <location>
        <position position="96"/>
    </location>
    <ligand>
        <name>substrate</name>
    </ligand>
</feature>
<feature type="binding site" evidence="1">
    <location>
        <begin position="129"/>
        <end position="130"/>
    </location>
    <ligand>
        <name>substrate</name>
    </ligand>
</feature>
<feature type="glycosylation site" description="N-linked (GlcNAc...) asparagine" evidence="2">
    <location>
        <position position="27"/>
    </location>
</feature>
<feature type="glycosylation site" description="N-linked (GlcNAc...) asparagine" evidence="2">
    <location>
        <position position="35"/>
    </location>
</feature>
<feature type="glycosylation site" description="N-linked (GlcNAc...) asparagine" evidence="2">
    <location>
        <position position="40"/>
    </location>
</feature>
<feature type="glycosylation site" description="N-linked (GlcNAc...) asparagine" evidence="2">
    <location>
        <position position="82"/>
    </location>
</feature>
<feature type="glycosylation site" description="N-linked (GlcNAc...) asparagine" evidence="2">
    <location>
        <position position="106"/>
    </location>
</feature>
<feature type="glycosylation site" description="N-linked (GlcNAc...) asparagine" evidence="2">
    <location>
        <position position="144"/>
    </location>
</feature>
<feature type="glycosylation site" description="N-linked (GlcNAc...) asparagine" evidence="2">
    <location>
        <position position="179"/>
    </location>
</feature>
<feature type="glycosylation site" description="N-linked (GlcNAc...) asparagine" evidence="2">
    <location>
        <position position="246"/>
    </location>
</feature>
<feature type="glycosylation site" description="N-linked (GlcNAc...) asparagine" evidence="2">
    <location>
        <position position="302"/>
    </location>
</feature>
<feature type="glycosylation site" description="N-linked (GlcNAc...) asparagine" evidence="2">
    <location>
        <position position="351"/>
    </location>
</feature>
<keyword id="KW-0134">Cell wall</keyword>
<keyword id="KW-0325">Glycoprotein</keyword>
<keyword id="KW-0378">Hydrolase</keyword>
<keyword id="KW-1185">Reference proteome</keyword>
<keyword id="KW-0964">Secreted</keyword>
<keyword id="KW-0732">Signal</keyword>
<name>ASPG1_SCHPO</name>
<protein>
    <recommendedName>
        <fullName>Probable L-asparaginase 1</fullName>
        <ecNumber>3.5.1.1</ecNumber>
    </recommendedName>
    <alternativeName>
        <fullName>L-asparagine amidohydrolase 1</fullName>
    </alternativeName>
</protein>
<evidence type="ECO:0000250" key="1"/>
<evidence type="ECO:0000255" key="2"/>
<evidence type="ECO:0000255" key="3">
    <source>
        <dbReference type="PROSITE-ProRule" id="PRU01068"/>
    </source>
</evidence>
<evidence type="ECO:0000305" key="4"/>